<sequence length="710" mass="79085">MVMACRVVNKRRHMGLQQLSSFAETGRTFLGPLKSSKFIIDEECHESVLISSTVRLLESLDLTSAVGQLLNEAVQAQNNTYRTGISTLLFLVGAWSSAVEECLHLGVPISIIVSVMSEGLNFCSEEVVSLHVPVHNIFDCMDSTKTFSQLETFSVSLCPFLQVPSDTDLIEELHGLKDVASQTLTISNLSGRPLKSYELFKPQTKVEADNNTSRTLKNSLLADTCCRQSILIHSRHFNRTDNTEGVSKPDGFQEHVTATHKTYRCNDLVELAVGLSHGDHSSMKLVEEAVQLQYQNACVQQGNCTKPFMFDISRIFTCCLPGLPETSSCVCPGYITVVSVSNNPVIKELQNQPVRIVLIEGDLTENYRHLGFNKSANIKTVLDSMRLQEDSSEELWANHVLQVLIQFKVNLVLVQGNVSERLIEKCINSKRLVIGSVNGSVMQAFAEAAGAVQVAYITQVNEDCVGDGVCVTFWRSSPLDVVDRNNRIAILLKTEGINLVTAVLTNPVTAQMQIKEDRFWTCAYRLYYALKEEKVFLGGGAVEFLCLSCLHILAEQSLKKENHACSGWLHNTSSWLASSLAIYRPTVLKFLANGWQKYLSTLLYNTANYSSEFEASTYIQHHLQNATDSGSPSSYILNEYSKLNSRIFNSDISNKLEQIPRVYDVVTPKIEAWRRALDLVLLVLQTDSEIITGHGHTQINSQELTGFLFL</sequence>
<name>BBS12_HUMAN</name>
<feature type="chain" id="PRO_0000301981" description="Chaperonin-containing T-complex member BBS12">
    <location>
        <begin position="1"/>
        <end position="710"/>
    </location>
</feature>
<feature type="sequence variant" id="VAR_034919" description="In dbSNP:rs138036823." evidence="3 7 8">
    <original>I</original>
    <variation>T</variation>
    <location>
        <position position="39"/>
    </location>
</feature>
<feature type="sequence variant" id="VAR_066266" description="In BBS12; dbSNP:rs746271266." evidence="8">
    <original>L</original>
    <variation>R</variation>
    <location>
        <position position="88"/>
    </location>
</feature>
<feature type="sequence variant" id="VAR_034920" description="In BBS12; significantly reduces the interaction with MKKS; shows significantly decreased interaction with BBS7; the interaction with BBS10 is not affected by this mutation." evidence="3 6">
    <location>
        <position position="113"/>
    </location>
</feature>
<feature type="sequence variant" id="VAR_066267" description="Associated with H-263 in a patient with Bardet-Biedl syndrome compound heterozygote for mutations in BBS10; dbSNP:rs77731085." evidence="8">
    <original>G</original>
    <variation>S</variation>
    <location>
        <position position="119"/>
    </location>
</feature>
<feature type="sequence variant" id="VAR_034921" description="In dbSNP:rs309369.">
    <original>E</original>
    <variation>D</variation>
    <location>
        <position position="126"/>
    </location>
</feature>
<feature type="sequence variant" id="VAR_034922" description="In BBS12; uncertain significance; significantly reduces the interaction with MKKS; the interaction with BBS10 is not affected by this mutation; dbSNP:rs1450190654." evidence="3 6">
    <original>P</original>
    <variation>L</variation>
    <location>
        <position position="159"/>
    </location>
</feature>
<feature type="sequence variant" id="VAR_034923" description="In dbSNP:rs1218692709." evidence="3">
    <original>I</original>
    <variation>V</variation>
    <location>
        <position position="170"/>
    </location>
</feature>
<feature type="sequence variant" id="VAR_034924" description="In dbSNP:rs17854892." evidence="2">
    <original>K</original>
    <variation>R</variation>
    <location>
        <position position="195"/>
    </location>
</feature>
<feature type="sequence variant" id="VAR_034925" description="In dbSNP:rs17006082.">
    <original>N</original>
    <variation>K</variation>
    <location>
        <position position="238"/>
    </location>
</feature>
<feature type="sequence variant" id="VAR_066268" description="Associated with S-119 in a patient with Bardet-Biedl syndrome compound heterozygote for mutations in BBS10; dbSNP:rs150040166." evidence="8">
    <original>Y</original>
    <variation>H</variation>
    <location>
        <position position="263"/>
    </location>
</feature>
<feature type="sequence variant" id="VAR_034926" description="In BBS12; significantly reduces the interaction with MKKS; shows significantly decreased interaction with BBS7; the interaction with BBS10 is not affected by this mutation; dbSNP:rs121918328." evidence="3 6">
    <original>A</original>
    <variation>P</variation>
    <location>
        <position position="289"/>
    </location>
</feature>
<feature type="sequence variant" id="VAR_066269" description="In BBS12." evidence="8">
    <original>Q</original>
    <variation>E</variation>
    <location>
        <position position="293"/>
    </location>
</feature>
<feature type="sequence variant" id="VAR_062964" description="In BBS12; significantly reduces the interaction with MKKS; shows significantly decreased interaction with BBS7; the interaction with BBS10 is not affected by this mutation; dbSNP:rs1553941373." evidence="3 6">
    <original>I</original>
    <variation>T</variation>
    <location>
        <position position="346"/>
    </location>
</feature>
<feature type="sequence variant" id="VAR_066270" description="In BBS12; dbSNP:rs1474900361." evidence="8">
    <original>R</original>
    <variation>Q</variation>
    <location>
        <position position="355"/>
    </location>
</feature>
<feature type="sequence variant" id="VAR_034927" description="In dbSNP:rs309370." evidence="1 2 4 10">
    <original>R</original>
    <variation>Q</variation>
    <location>
        <position position="386"/>
    </location>
</feature>
<feature type="sequence variant" id="VAR_066271" description="In BBS12; dbSNP:rs771136797." evidence="8">
    <original>V</original>
    <variation>M</variation>
    <location>
        <position position="400"/>
    </location>
</feature>
<feature type="sequence variant" id="VAR_066272" description="In a patient with Bardet-Biedl syndrome compound heterozygote for BBS2 mutations; uncertain significance." evidence="7">
    <original>K</original>
    <variation>R</variation>
    <location>
        <position position="408"/>
    </location>
</feature>
<feature type="sequence variant" id="VAR_034928" description="In dbSNP:rs7665271.">
    <original>S</original>
    <variation>T</variation>
    <location>
        <position position="429"/>
    </location>
</feature>
<feature type="sequence variant" id="VAR_034929" description="In dbSNP:rs10027479.">
    <original>N</original>
    <variation>H</variation>
    <location>
        <position position="461"/>
    </location>
</feature>
<feature type="sequence variant" id="VAR_034930" description="In dbSNP:rs13135778." evidence="1 2">
    <original>D</original>
    <variation>N</variation>
    <location>
        <position position="467"/>
    </location>
</feature>
<feature type="sequence variant" id="VAR_034931" description="In dbSNP:rs35690634.">
    <original>R</original>
    <variation>K</variation>
    <location>
        <position position="484"/>
    </location>
</feature>
<feature type="sequence variant" id="VAR_062965" description="In BBS12; significantly reduces the interaction with MKKS; shows significantly decreased interaction with BBS7; the interaction with BBS10 is not affected by this mutation; dbSNP:rs138011813." evidence="3 6 8">
    <original>T</original>
    <variation>M</variation>
    <location>
        <position position="501"/>
    </location>
</feature>
<feature type="sequence variant" id="VAR_066273" description="In BBS12." evidence="7">
    <location>
        <begin position="511"/>
        <end position="513"/>
    </location>
</feature>
<feature type="sequence variant" id="VAR_066274" description="In a patient with Bardet-Biedl syndrome homozygous for a mutation in BBS2; uncertain significance; dbSNP:rs770746493." evidence="7">
    <original>Y</original>
    <variation>C</variation>
    <location>
        <position position="524"/>
    </location>
</feature>
<feature type="sequence variant" id="VAR_066275" description="In BBS12; uncertain significance; dbSNP:rs776730549." evidence="8">
    <original>R</original>
    <variation>H</variation>
    <location>
        <position position="525"/>
    </location>
</feature>
<feature type="sequence variant" id="VAR_066276" description="In BBS12." evidence="8">
    <original>G</original>
    <variation>D</variation>
    <location>
        <position position="539"/>
    </location>
</feature>
<feature type="sequence variant" id="VAR_034932" description="In BBS12; significantly reduces the interaction with MKKS; shows significantly decreased interaction with BBS7; the interaction with BBS10 is not affected by this mutation; dbSNP:rs1010403072." evidence="3 6">
    <original>G</original>
    <variation>V</variation>
    <location>
        <position position="540"/>
    </location>
</feature>
<feature type="sequence variant" id="VAR_034933" description="In dbSNP:rs17857451." evidence="2">
    <original>A</original>
    <variation>V</variation>
    <location>
        <position position="615"/>
    </location>
</feature>
<feature type="sequence variant" id="VAR_066277" description="In BBS12; dbSNP:rs759088490." evidence="8">
    <original>R</original>
    <variation>C</variation>
    <location>
        <position position="674"/>
    </location>
</feature>
<feature type="sequence conflict" description="In Ref. 2; CAD98035." evidence="11" ref="2">
    <original>E</original>
    <variation>G</variation>
    <location>
        <position position="462"/>
    </location>
</feature>
<feature type="sequence conflict" description="In Ref. 1; BAC04006." evidence="11" ref="1">
    <original>K</original>
    <variation>R</variation>
    <location>
        <position position="597"/>
    </location>
</feature>
<accession>Q6ZW61</accession>
<accession>D3DNX5</accession>
<accession>Q7Z342</accession>
<accession>Q7Z482</accession>
<accession>Q8NAB8</accession>
<comment type="function">
    <text evidence="5 6">Component of the chaperonin-containing T-complex (TRiC), a molecular chaperone complex that assists the folding of proteins upon ATP hydrolysis. As part of the TRiC complex may play a role in the assembly of BBSome, a complex involved in ciliogenesis regulating transports vesicles to the cilia (PubMed:20080638). Involved in adipogenic differentiation (PubMed:19190184).</text>
</comment>
<comment type="subunit">
    <text evidence="6 9">Component of the chaperonin-containing T-complex (TRiC), a heterooligomeric complex of about 850 to 900 kDa that forms two stacked rings, 12 to 16 nm in diameter (PubMed:20080638). Interacts with MKKS (PubMed:26900326).</text>
</comment>
<comment type="interaction">
    <interactant intactId="EBI-6128352">
        <id>Q6ZW61</id>
    </interactant>
    <interactant intactId="EBI-6128013">
        <id>Q8TAM1</id>
        <label>BBS10</label>
    </interactant>
    <organismsDiffer>false</organismsDiffer>
    <experiments>5</experiments>
</comment>
<comment type="interaction">
    <interactant intactId="EBI-6128352">
        <id>Q6ZW61</id>
    </interactant>
    <interactant intactId="EBI-748297">
        <id>Q9BXC9</id>
        <label>BBS2</label>
    </interactant>
    <organismsDiffer>false</organismsDiffer>
    <experiments>2</experiments>
</comment>
<comment type="interaction">
    <interactant intactId="EBI-6128352">
        <id>Q6ZW61</id>
    </interactant>
    <interactant intactId="EBI-1806001">
        <id>Q8IWZ6</id>
        <label>BBS7</label>
    </interactant>
    <organismsDiffer>false</organismsDiffer>
    <experiments>8</experiments>
</comment>
<comment type="interaction">
    <interactant intactId="EBI-6128352">
        <id>Q6ZW61</id>
    </interactant>
    <interactant intactId="EBI-2826852">
        <id>Q3SYG4</id>
        <label>BBS9</label>
    </interactant>
    <organismsDiffer>false</organismsDiffer>
    <experiments>2</experiments>
</comment>
<comment type="interaction">
    <interactant intactId="EBI-6128352">
        <id>Q6ZW61</id>
    </interactant>
    <interactant intactId="EBI-721319">
        <id>Q9NPJ1</id>
        <label>MKKS</label>
    </interactant>
    <organismsDiffer>false</organismsDiffer>
    <experiments>15</experiments>
</comment>
<comment type="subcellular location">
    <subcellularLocation>
        <location evidence="5">Cell projection</location>
        <location evidence="5">Cilium</location>
    </subcellularLocation>
    <text evidence="5">Located within the basal body of the primary cilium of differentiating preadipocytes.</text>
</comment>
<comment type="disease" evidence="3 6 7 8">
    <disease id="DI-01269">
        <name>Bardet-Biedl syndrome 12</name>
        <acronym>BBS12</acronym>
        <description>A syndrome characterized by usually severe pigmentary retinopathy, early-onset obesity, polydactyly, hypogenitalism, renal malformation and intellectual disability. Secondary features include diabetes mellitus, hypertension and congenital heart disease. Bardet-Biedl syndrome inheritance is autosomal recessive, but three mutated alleles (two at one locus, and a third at a second locus) may be required for clinical manifestation of some forms of the disease.</description>
        <dbReference type="MIM" id="615989"/>
    </disease>
    <text>The disease is caused by variants affecting the gene represented in this entry.</text>
</comment>
<comment type="miscellaneous">
    <text>Adipocytes derived from BBS-patients' dermal fibroblasts in culture exhibit higher propensity for fat accumulation when compared to controls. This strongly suggests that a peripheral primary dysfunction of adipogenesis participates in the pathogenesis of obesity in BBS.</text>
</comment>
<comment type="similarity">
    <text evidence="11">Belongs to the TCP-1 chaperonin family. BBS12 subfamily.</text>
</comment>
<comment type="sequence caution" evidence="11">
    <conflict type="erroneous initiation">
        <sequence resource="EMBL-CDS" id="BAC04006"/>
    </conflict>
    <text>Truncated N-terminus.</text>
</comment>
<dbReference type="EMBL" id="AK092949">
    <property type="protein sequence ID" value="BAC04006.1"/>
    <property type="status" value="ALT_INIT"/>
    <property type="molecule type" value="mRNA"/>
</dbReference>
<dbReference type="EMBL" id="AK123553">
    <property type="protein sequence ID" value="BAC85644.1"/>
    <property type="molecule type" value="mRNA"/>
</dbReference>
<dbReference type="EMBL" id="BX538148">
    <property type="protein sequence ID" value="CAD98035.1"/>
    <property type="molecule type" value="mRNA"/>
</dbReference>
<dbReference type="EMBL" id="AC053545">
    <property type="status" value="NOT_ANNOTATED_CDS"/>
    <property type="molecule type" value="Genomic_DNA"/>
</dbReference>
<dbReference type="EMBL" id="CH471056">
    <property type="protein sequence ID" value="EAX05223.1"/>
    <property type="molecule type" value="Genomic_DNA"/>
</dbReference>
<dbReference type="EMBL" id="CH471056">
    <property type="protein sequence ID" value="EAX05224.1"/>
    <property type="molecule type" value="Genomic_DNA"/>
</dbReference>
<dbReference type="EMBL" id="BC055426">
    <property type="protein sequence ID" value="AAH55426.1"/>
    <property type="molecule type" value="mRNA"/>
</dbReference>
<dbReference type="CCDS" id="CCDS3728.1"/>
<dbReference type="RefSeq" id="NP_001171478.1">
    <property type="nucleotide sequence ID" value="NM_001178007.2"/>
</dbReference>
<dbReference type="RefSeq" id="NP_689831.2">
    <property type="nucleotide sequence ID" value="NM_152618.2"/>
</dbReference>
<dbReference type="RefSeq" id="XP_011529982.1">
    <property type="nucleotide sequence ID" value="XM_011531680.3"/>
</dbReference>
<dbReference type="RefSeq" id="XP_016863320.1">
    <property type="nucleotide sequence ID" value="XM_017007831.1"/>
</dbReference>
<dbReference type="RefSeq" id="XP_054205060.1">
    <property type="nucleotide sequence ID" value="XM_054349085.1"/>
</dbReference>
<dbReference type="SMR" id="Q6ZW61"/>
<dbReference type="BioGRID" id="127928">
    <property type="interactions" value="11"/>
</dbReference>
<dbReference type="CORUM" id="Q6ZW61"/>
<dbReference type="DIP" id="DIP-60348N"/>
<dbReference type="FunCoup" id="Q6ZW61">
    <property type="interactions" value="201"/>
</dbReference>
<dbReference type="IntAct" id="Q6ZW61">
    <property type="interactions" value="9"/>
</dbReference>
<dbReference type="STRING" id="9606.ENSP00000438273"/>
<dbReference type="iPTMnet" id="Q6ZW61"/>
<dbReference type="PhosphoSitePlus" id="Q6ZW61"/>
<dbReference type="BioMuta" id="BBS12"/>
<dbReference type="DMDM" id="296434408"/>
<dbReference type="MassIVE" id="Q6ZW61"/>
<dbReference type="PaxDb" id="9606-ENSP00000438273"/>
<dbReference type="PeptideAtlas" id="Q6ZW61"/>
<dbReference type="ProteomicsDB" id="68466"/>
<dbReference type="Antibodypedia" id="26856">
    <property type="antibodies" value="45 antibodies from 13 providers"/>
</dbReference>
<dbReference type="DNASU" id="166379"/>
<dbReference type="Ensembl" id="ENST00000314218.8">
    <property type="protein sequence ID" value="ENSP00000319062.3"/>
    <property type="gene ID" value="ENSG00000181004.10"/>
</dbReference>
<dbReference type="Ensembl" id="ENST00000542236.5">
    <property type="protein sequence ID" value="ENSP00000438273.1"/>
    <property type="gene ID" value="ENSG00000181004.10"/>
</dbReference>
<dbReference type="GeneID" id="166379"/>
<dbReference type="KEGG" id="hsa:166379"/>
<dbReference type="MANE-Select" id="ENST00000314218.8">
    <property type="protein sequence ID" value="ENSP00000319062.3"/>
    <property type="RefSeq nucleotide sequence ID" value="NM_152618.3"/>
    <property type="RefSeq protein sequence ID" value="NP_689831.2"/>
</dbReference>
<dbReference type="UCSC" id="uc003ieu.3">
    <property type="organism name" value="human"/>
</dbReference>
<dbReference type="AGR" id="HGNC:26648"/>
<dbReference type="CTD" id="166379"/>
<dbReference type="DisGeNET" id="166379"/>
<dbReference type="GeneCards" id="BBS12"/>
<dbReference type="GeneReviews" id="BBS12"/>
<dbReference type="HGNC" id="HGNC:26648">
    <property type="gene designation" value="BBS12"/>
</dbReference>
<dbReference type="HPA" id="ENSG00000181004">
    <property type="expression patterns" value="Tissue enhanced (retina)"/>
</dbReference>
<dbReference type="MalaCards" id="BBS12"/>
<dbReference type="MIM" id="610683">
    <property type="type" value="gene"/>
</dbReference>
<dbReference type="MIM" id="615989">
    <property type="type" value="phenotype"/>
</dbReference>
<dbReference type="neXtProt" id="NX_Q6ZW61"/>
<dbReference type="OpenTargets" id="ENSG00000181004"/>
<dbReference type="Orphanet" id="110">
    <property type="disease" value="Bardet-Biedl syndrome"/>
</dbReference>
<dbReference type="PharmGKB" id="PA162377350"/>
<dbReference type="VEuPathDB" id="HostDB:ENSG00000181004"/>
<dbReference type="eggNOG" id="ENOG502QUYD">
    <property type="taxonomic scope" value="Eukaryota"/>
</dbReference>
<dbReference type="GeneTree" id="ENSGT00390000008984"/>
<dbReference type="HOGENOM" id="CLU_025269_0_0_1"/>
<dbReference type="InParanoid" id="Q6ZW61"/>
<dbReference type="OMA" id="CPFLQIP"/>
<dbReference type="OrthoDB" id="10037098at2759"/>
<dbReference type="PAN-GO" id="Q6ZW61">
    <property type="GO annotations" value="2 GO annotations based on evolutionary models"/>
</dbReference>
<dbReference type="PhylomeDB" id="Q6ZW61"/>
<dbReference type="TreeFam" id="TF330844"/>
<dbReference type="PathwayCommons" id="Q6ZW61"/>
<dbReference type="Reactome" id="R-HSA-5620922">
    <property type="pathway name" value="BBSome-mediated cargo-targeting to cilium"/>
</dbReference>
<dbReference type="SignaLink" id="Q6ZW61"/>
<dbReference type="BioGRID-ORCS" id="166379">
    <property type="hits" value="12 hits in 1157 CRISPR screens"/>
</dbReference>
<dbReference type="ChiTaRS" id="BBS12">
    <property type="organism name" value="human"/>
</dbReference>
<dbReference type="GeneWiki" id="BBS12"/>
<dbReference type="GenomeRNAi" id="166379"/>
<dbReference type="Pharos" id="Q6ZW61">
    <property type="development level" value="Tbio"/>
</dbReference>
<dbReference type="PRO" id="PR:Q6ZW61"/>
<dbReference type="Proteomes" id="UP000005640">
    <property type="component" value="Chromosome 4"/>
</dbReference>
<dbReference type="RNAct" id="Q6ZW61">
    <property type="molecule type" value="protein"/>
</dbReference>
<dbReference type="Bgee" id="ENSG00000181004">
    <property type="expression patterns" value="Expressed in primordial germ cell in gonad and 141 other cell types or tissues"/>
</dbReference>
<dbReference type="ExpressionAtlas" id="Q6ZW61">
    <property type="expression patterns" value="baseline and differential"/>
</dbReference>
<dbReference type="GO" id="GO:0005929">
    <property type="term" value="C:cilium"/>
    <property type="evidence" value="ECO:0007669"/>
    <property type="project" value="UniProtKB-SubCell"/>
</dbReference>
<dbReference type="GO" id="GO:0005524">
    <property type="term" value="F:ATP binding"/>
    <property type="evidence" value="ECO:0007669"/>
    <property type="project" value="InterPro"/>
</dbReference>
<dbReference type="GO" id="GO:0051131">
    <property type="term" value="P:chaperone-mediated protein complex assembly"/>
    <property type="evidence" value="ECO:0000315"/>
    <property type="project" value="MGI"/>
</dbReference>
<dbReference type="GO" id="GO:0042755">
    <property type="term" value="P:eating behavior"/>
    <property type="evidence" value="ECO:0007669"/>
    <property type="project" value="Ensembl"/>
</dbReference>
<dbReference type="GO" id="GO:0045444">
    <property type="term" value="P:fat cell differentiation"/>
    <property type="evidence" value="ECO:0007669"/>
    <property type="project" value="Ensembl"/>
</dbReference>
<dbReference type="GO" id="GO:0042073">
    <property type="term" value="P:intraciliary transport"/>
    <property type="evidence" value="ECO:0007669"/>
    <property type="project" value="Ensembl"/>
</dbReference>
<dbReference type="GO" id="GO:0045599">
    <property type="term" value="P:negative regulation of fat cell differentiation"/>
    <property type="evidence" value="ECO:0000315"/>
    <property type="project" value="MGI"/>
</dbReference>
<dbReference type="GO" id="GO:2000737">
    <property type="term" value="P:negative regulation of stem cell differentiation"/>
    <property type="evidence" value="ECO:0007669"/>
    <property type="project" value="Ensembl"/>
</dbReference>
<dbReference type="GO" id="GO:0045494">
    <property type="term" value="P:photoreceptor cell maintenance"/>
    <property type="evidence" value="ECO:0000318"/>
    <property type="project" value="GO_Central"/>
</dbReference>
<dbReference type="GO" id="GO:0048863">
    <property type="term" value="P:stem cell differentiation"/>
    <property type="evidence" value="ECO:0007669"/>
    <property type="project" value="Ensembl"/>
</dbReference>
<dbReference type="FunFam" id="1.10.560.10:FF:000044">
    <property type="entry name" value="Bardet-Biedl syndrome 12 protein"/>
    <property type="match status" value="1"/>
</dbReference>
<dbReference type="FunFam" id="3.50.7.10:FF:000021">
    <property type="entry name" value="Bardet-Biedl syndrome 12 protein homolog"/>
    <property type="match status" value="1"/>
</dbReference>
<dbReference type="Gene3D" id="3.50.7.10">
    <property type="entry name" value="GroEL"/>
    <property type="match status" value="1"/>
</dbReference>
<dbReference type="Gene3D" id="1.10.560.10">
    <property type="entry name" value="GroEL-like equatorial domain"/>
    <property type="match status" value="2"/>
</dbReference>
<dbReference type="Gene3D" id="3.30.260.10">
    <property type="entry name" value="TCP-1-like chaperonin intermediate domain"/>
    <property type="match status" value="1"/>
</dbReference>
<dbReference type="InterPro" id="IPR042984">
    <property type="entry name" value="BBS12"/>
</dbReference>
<dbReference type="InterPro" id="IPR002423">
    <property type="entry name" value="Cpn60/GroEL/TCP-1"/>
</dbReference>
<dbReference type="InterPro" id="IPR027409">
    <property type="entry name" value="GroEL-like_apical_dom_sf"/>
</dbReference>
<dbReference type="InterPro" id="IPR027413">
    <property type="entry name" value="GROEL-like_equatorial_sf"/>
</dbReference>
<dbReference type="InterPro" id="IPR027410">
    <property type="entry name" value="TCP-1-like_intermed_sf"/>
</dbReference>
<dbReference type="PANTHER" id="PTHR46883">
    <property type="entry name" value="BARDET-BIEDL SYNDROME 12 PROTEIN"/>
    <property type="match status" value="1"/>
</dbReference>
<dbReference type="PANTHER" id="PTHR46883:SF1">
    <property type="entry name" value="BARDET-BIEDL SYNDROME 12 PROTEIN"/>
    <property type="match status" value="1"/>
</dbReference>
<dbReference type="Pfam" id="PF00118">
    <property type="entry name" value="Cpn60_TCP1"/>
    <property type="match status" value="1"/>
</dbReference>
<dbReference type="SUPFAM" id="SSF52029">
    <property type="entry name" value="GroEL apical domain-like"/>
    <property type="match status" value="1"/>
</dbReference>
<dbReference type="SUPFAM" id="SSF48592">
    <property type="entry name" value="GroEL equatorial domain-like"/>
    <property type="match status" value="1"/>
</dbReference>
<keyword id="KW-0083">Bardet-Biedl syndrome</keyword>
<keyword id="KW-0966">Cell projection</keyword>
<keyword id="KW-1186">Ciliopathy</keyword>
<keyword id="KW-0969">Cilium</keyword>
<keyword id="KW-0225">Disease variant</keyword>
<keyword id="KW-0991">Intellectual disability</keyword>
<keyword id="KW-0550">Obesity</keyword>
<keyword id="KW-1267">Proteomics identification</keyword>
<keyword id="KW-1185">Reference proteome</keyword>
<organism>
    <name type="scientific">Homo sapiens</name>
    <name type="common">Human</name>
    <dbReference type="NCBI Taxonomy" id="9606"/>
    <lineage>
        <taxon>Eukaryota</taxon>
        <taxon>Metazoa</taxon>
        <taxon>Chordata</taxon>
        <taxon>Craniata</taxon>
        <taxon>Vertebrata</taxon>
        <taxon>Euteleostomi</taxon>
        <taxon>Mammalia</taxon>
        <taxon>Eutheria</taxon>
        <taxon>Euarchontoglires</taxon>
        <taxon>Primates</taxon>
        <taxon>Haplorrhini</taxon>
        <taxon>Catarrhini</taxon>
        <taxon>Hominidae</taxon>
        <taxon>Homo</taxon>
    </lineage>
</organism>
<evidence type="ECO:0000269" key="1">
    <source>
    </source>
</evidence>
<evidence type="ECO:0000269" key="2">
    <source>
    </source>
</evidence>
<evidence type="ECO:0000269" key="3">
    <source>
    </source>
</evidence>
<evidence type="ECO:0000269" key="4">
    <source>
    </source>
</evidence>
<evidence type="ECO:0000269" key="5">
    <source>
    </source>
</evidence>
<evidence type="ECO:0000269" key="6">
    <source>
    </source>
</evidence>
<evidence type="ECO:0000269" key="7">
    <source>
    </source>
</evidence>
<evidence type="ECO:0000269" key="8">
    <source>
    </source>
</evidence>
<evidence type="ECO:0000269" key="9">
    <source>
    </source>
</evidence>
<evidence type="ECO:0000269" key="10">
    <source ref="4"/>
</evidence>
<evidence type="ECO:0000305" key="11"/>
<gene>
    <name type="primary">BBS12</name>
    <name type="synonym">C4orf24</name>
</gene>
<protein>
    <recommendedName>
        <fullName evidence="11">Chaperonin-containing T-complex member BBS12</fullName>
    </recommendedName>
    <alternativeName>
        <fullName>Bardet-Biedl syndrome 12 protein</fullName>
    </alternativeName>
</protein>
<proteinExistence type="evidence at protein level"/>
<reference key="1">
    <citation type="journal article" date="2004" name="Nat. Genet.">
        <title>Complete sequencing and characterization of 21,243 full-length human cDNAs.</title>
        <authorList>
            <person name="Ota T."/>
            <person name="Suzuki Y."/>
            <person name="Nishikawa T."/>
            <person name="Otsuki T."/>
            <person name="Sugiyama T."/>
            <person name="Irie R."/>
            <person name="Wakamatsu A."/>
            <person name="Hayashi K."/>
            <person name="Sato H."/>
            <person name="Nagai K."/>
            <person name="Kimura K."/>
            <person name="Makita H."/>
            <person name="Sekine M."/>
            <person name="Obayashi M."/>
            <person name="Nishi T."/>
            <person name="Shibahara T."/>
            <person name="Tanaka T."/>
            <person name="Ishii S."/>
            <person name="Yamamoto J."/>
            <person name="Saito K."/>
            <person name="Kawai Y."/>
            <person name="Isono Y."/>
            <person name="Nakamura Y."/>
            <person name="Nagahari K."/>
            <person name="Murakami K."/>
            <person name="Yasuda T."/>
            <person name="Iwayanagi T."/>
            <person name="Wagatsuma M."/>
            <person name="Shiratori A."/>
            <person name="Sudo H."/>
            <person name="Hosoiri T."/>
            <person name="Kaku Y."/>
            <person name="Kodaira H."/>
            <person name="Kondo H."/>
            <person name="Sugawara M."/>
            <person name="Takahashi M."/>
            <person name="Kanda K."/>
            <person name="Yokoi T."/>
            <person name="Furuya T."/>
            <person name="Kikkawa E."/>
            <person name="Omura Y."/>
            <person name="Abe K."/>
            <person name="Kamihara K."/>
            <person name="Katsuta N."/>
            <person name="Sato K."/>
            <person name="Tanikawa M."/>
            <person name="Yamazaki M."/>
            <person name="Ninomiya K."/>
            <person name="Ishibashi T."/>
            <person name="Yamashita H."/>
            <person name="Murakawa K."/>
            <person name="Fujimori K."/>
            <person name="Tanai H."/>
            <person name="Kimata M."/>
            <person name="Watanabe M."/>
            <person name="Hiraoka S."/>
            <person name="Chiba Y."/>
            <person name="Ishida S."/>
            <person name="Ono Y."/>
            <person name="Takiguchi S."/>
            <person name="Watanabe S."/>
            <person name="Yosida M."/>
            <person name="Hotuta T."/>
            <person name="Kusano J."/>
            <person name="Kanehori K."/>
            <person name="Takahashi-Fujii A."/>
            <person name="Hara H."/>
            <person name="Tanase T.-O."/>
            <person name="Nomura Y."/>
            <person name="Togiya S."/>
            <person name="Komai F."/>
            <person name="Hara R."/>
            <person name="Takeuchi K."/>
            <person name="Arita M."/>
            <person name="Imose N."/>
            <person name="Musashino K."/>
            <person name="Yuuki H."/>
            <person name="Oshima A."/>
            <person name="Sasaki N."/>
            <person name="Aotsuka S."/>
            <person name="Yoshikawa Y."/>
            <person name="Matsunawa H."/>
            <person name="Ichihara T."/>
            <person name="Shiohata N."/>
            <person name="Sano S."/>
            <person name="Moriya S."/>
            <person name="Momiyama H."/>
            <person name="Satoh N."/>
            <person name="Takami S."/>
            <person name="Terashima Y."/>
            <person name="Suzuki O."/>
            <person name="Nakagawa S."/>
            <person name="Senoh A."/>
            <person name="Mizoguchi H."/>
            <person name="Goto Y."/>
            <person name="Shimizu F."/>
            <person name="Wakebe H."/>
            <person name="Hishigaki H."/>
            <person name="Watanabe T."/>
            <person name="Sugiyama A."/>
            <person name="Takemoto M."/>
            <person name="Kawakami B."/>
            <person name="Yamazaki M."/>
            <person name="Watanabe K."/>
            <person name="Kumagai A."/>
            <person name="Itakura S."/>
            <person name="Fukuzumi Y."/>
            <person name="Fujimori Y."/>
            <person name="Komiyama M."/>
            <person name="Tashiro H."/>
            <person name="Tanigami A."/>
            <person name="Fujiwara T."/>
            <person name="Ono T."/>
            <person name="Yamada K."/>
            <person name="Fujii Y."/>
            <person name="Ozaki K."/>
            <person name="Hirao M."/>
            <person name="Ohmori Y."/>
            <person name="Kawabata A."/>
            <person name="Hikiji T."/>
            <person name="Kobatake N."/>
            <person name="Inagaki H."/>
            <person name="Ikema Y."/>
            <person name="Okamoto S."/>
            <person name="Okitani R."/>
            <person name="Kawakami T."/>
            <person name="Noguchi S."/>
            <person name="Itoh T."/>
            <person name="Shigeta K."/>
            <person name="Senba T."/>
            <person name="Matsumura K."/>
            <person name="Nakajima Y."/>
            <person name="Mizuno T."/>
            <person name="Morinaga M."/>
            <person name="Sasaki M."/>
            <person name="Togashi T."/>
            <person name="Oyama M."/>
            <person name="Hata H."/>
            <person name="Watanabe M."/>
            <person name="Komatsu T."/>
            <person name="Mizushima-Sugano J."/>
            <person name="Satoh T."/>
            <person name="Shirai Y."/>
            <person name="Takahashi Y."/>
            <person name="Nakagawa K."/>
            <person name="Okumura K."/>
            <person name="Nagase T."/>
            <person name="Nomura N."/>
            <person name="Kikuchi H."/>
            <person name="Masuho Y."/>
            <person name="Yamashita R."/>
            <person name="Nakai K."/>
            <person name="Yada T."/>
            <person name="Nakamura Y."/>
            <person name="Ohara O."/>
            <person name="Isogai T."/>
            <person name="Sugano S."/>
        </authorList>
    </citation>
    <scope>NUCLEOTIDE SEQUENCE [LARGE SCALE MRNA]</scope>
    <scope>VARIANTS GLN-386 AND ASN-467</scope>
    <source>
        <tissue>Spleen</tissue>
        <tissue>Tongue</tissue>
    </source>
</reference>
<reference key="2">
    <citation type="journal article" date="2007" name="BMC Genomics">
        <title>The full-ORF clone resource of the German cDNA consortium.</title>
        <authorList>
            <person name="Bechtel S."/>
            <person name="Rosenfelder H."/>
            <person name="Duda A."/>
            <person name="Schmidt C.P."/>
            <person name="Ernst U."/>
            <person name="Wellenreuther R."/>
            <person name="Mehrle A."/>
            <person name="Schuster C."/>
            <person name="Bahr A."/>
            <person name="Bloecker H."/>
            <person name="Heubner D."/>
            <person name="Hoerlein A."/>
            <person name="Michel G."/>
            <person name="Wedler H."/>
            <person name="Koehrer K."/>
            <person name="Ottenwaelder B."/>
            <person name="Poustka A."/>
            <person name="Wiemann S."/>
            <person name="Schupp I."/>
        </authorList>
    </citation>
    <scope>NUCLEOTIDE SEQUENCE [LARGE SCALE MRNA]</scope>
    <scope>VARIANT GLN-386</scope>
    <source>
        <tissue>Fetal kidney</tissue>
    </source>
</reference>
<reference key="3">
    <citation type="journal article" date="2005" name="Nature">
        <title>Generation and annotation of the DNA sequences of human chromosomes 2 and 4.</title>
        <authorList>
            <person name="Hillier L.W."/>
            <person name="Graves T.A."/>
            <person name="Fulton R.S."/>
            <person name="Fulton L.A."/>
            <person name="Pepin K.H."/>
            <person name="Minx P."/>
            <person name="Wagner-McPherson C."/>
            <person name="Layman D."/>
            <person name="Wylie K."/>
            <person name="Sekhon M."/>
            <person name="Becker M.C."/>
            <person name="Fewell G.A."/>
            <person name="Delehaunty K.D."/>
            <person name="Miner T.L."/>
            <person name="Nash W.E."/>
            <person name="Kremitzki C."/>
            <person name="Oddy L."/>
            <person name="Du H."/>
            <person name="Sun H."/>
            <person name="Bradshaw-Cordum H."/>
            <person name="Ali J."/>
            <person name="Carter J."/>
            <person name="Cordes M."/>
            <person name="Harris A."/>
            <person name="Isak A."/>
            <person name="van Brunt A."/>
            <person name="Nguyen C."/>
            <person name="Du F."/>
            <person name="Courtney L."/>
            <person name="Kalicki J."/>
            <person name="Ozersky P."/>
            <person name="Abbott S."/>
            <person name="Armstrong J."/>
            <person name="Belter E.A."/>
            <person name="Caruso L."/>
            <person name="Cedroni M."/>
            <person name="Cotton M."/>
            <person name="Davidson T."/>
            <person name="Desai A."/>
            <person name="Elliott G."/>
            <person name="Erb T."/>
            <person name="Fronick C."/>
            <person name="Gaige T."/>
            <person name="Haakenson W."/>
            <person name="Haglund K."/>
            <person name="Holmes A."/>
            <person name="Harkins R."/>
            <person name="Kim K."/>
            <person name="Kruchowski S.S."/>
            <person name="Strong C.M."/>
            <person name="Grewal N."/>
            <person name="Goyea E."/>
            <person name="Hou S."/>
            <person name="Levy A."/>
            <person name="Martinka S."/>
            <person name="Mead K."/>
            <person name="McLellan M.D."/>
            <person name="Meyer R."/>
            <person name="Randall-Maher J."/>
            <person name="Tomlinson C."/>
            <person name="Dauphin-Kohlberg S."/>
            <person name="Kozlowicz-Reilly A."/>
            <person name="Shah N."/>
            <person name="Swearengen-Shahid S."/>
            <person name="Snider J."/>
            <person name="Strong J.T."/>
            <person name="Thompson J."/>
            <person name="Yoakum M."/>
            <person name="Leonard S."/>
            <person name="Pearman C."/>
            <person name="Trani L."/>
            <person name="Radionenko M."/>
            <person name="Waligorski J.E."/>
            <person name="Wang C."/>
            <person name="Rock S.M."/>
            <person name="Tin-Wollam A.-M."/>
            <person name="Maupin R."/>
            <person name="Latreille P."/>
            <person name="Wendl M.C."/>
            <person name="Yang S.-P."/>
            <person name="Pohl C."/>
            <person name="Wallis J.W."/>
            <person name="Spieth J."/>
            <person name="Bieri T.A."/>
            <person name="Berkowicz N."/>
            <person name="Nelson J.O."/>
            <person name="Osborne J."/>
            <person name="Ding L."/>
            <person name="Meyer R."/>
            <person name="Sabo A."/>
            <person name="Shotland Y."/>
            <person name="Sinha P."/>
            <person name="Wohldmann P.E."/>
            <person name="Cook L.L."/>
            <person name="Hickenbotham M.T."/>
            <person name="Eldred J."/>
            <person name="Williams D."/>
            <person name="Jones T.A."/>
            <person name="She X."/>
            <person name="Ciccarelli F.D."/>
            <person name="Izaurralde E."/>
            <person name="Taylor J."/>
            <person name="Schmutz J."/>
            <person name="Myers R.M."/>
            <person name="Cox D.R."/>
            <person name="Huang X."/>
            <person name="McPherson J.D."/>
            <person name="Mardis E.R."/>
            <person name="Clifton S.W."/>
            <person name="Warren W.C."/>
            <person name="Chinwalla A.T."/>
            <person name="Eddy S.R."/>
            <person name="Marra M.A."/>
            <person name="Ovcharenko I."/>
            <person name="Furey T.S."/>
            <person name="Miller W."/>
            <person name="Eichler E.E."/>
            <person name="Bork P."/>
            <person name="Suyama M."/>
            <person name="Torrents D."/>
            <person name="Waterston R.H."/>
            <person name="Wilson R.K."/>
        </authorList>
    </citation>
    <scope>NUCLEOTIDE SEQUENCE [LARGE SCALE GENOMIC DNA]</scope>
</reference>
<reference key="4">
    <citation type="submission" date="2005-09" db="EMBL/GenBank/DDBJ databases">
        <authorList>
            <person name="Mural R.J."/>
            <person name="Istrail S."/>
            <person name="Sutton G.G."/>
            <person name="Florea L."/>
            <person name="Halpern A.L."/>
            <person name="Mobarry C.M."/>
            <person name="Lippert R."/>
            <person name="Walenz B."/>
            <person name="Shatkay H."/>
            <person name="Dew I."/>
            <person name="Miller J.R."/>
            <person name="Flanigan M.J."/>
            <person name="Edwards N.J."/>
            <person name="Bolanos R."/>
            <person name="Fasulo D."/>
            <person name="Halldorsson B.V."/>
            <person name="Hannenhalli S."/>
            <person name="Turner R."/>
            <person name="Yooseph S."/>
            <person name="Lu F."/>
            <person name="Nusskern D.R."/>
            <person name="Shue B.C."/>
            <person name="Zheng X.H."/>
            <person name="Zhong F."/>
            <person name="Delcher A.L."/>
            <person name="Huson D.H."/>
            <person name="Kravitz S.A."/>
            <person name="Mouchard L."/>
            <person name="Reinert K."/>
            <person name="Remington K.A."/>
            <person name="Clark A.G."/>
            <person name="Waterman M.S."/>
            <person name="Eichler E.E."/>
            <person name="Adams M.D."/>
            <person name="Hunkapiller M.W."/>
            <person name="Myers E.W."/>
            <person name="Venter J.C."/>
        </authorList>
    </citation>
    <scope>NUCLEOTIDE SEQUENCE [LARGE SCALE GENOMIC DNA]</scope>
    <scope>VARIANT GLN-386</scope>
</reference>
<reference key="5">
    <citation type="journal article" date="2004" name="Genome Res.">
        <title>The status, quality, and expansion of the NIH full-length cDNA project: the Mammalian Gene Collection (MGC).</title>
        <authorList>
            <consortium name="The MGC Project Team"/>
        </authorList>
    </citation>
    <scope>NUCLEOTIDE SEQUENCE [LARGE SCALE MRNA]</scope>
    <scope>VARIANTS ARG-195; GLN-386; ASN-467 AND VAL-615</scope>
    <source>
        <tissue>Brain</tissue>
    </source>
</reference>
<reference key="6">
    <citation type="journal article" date="2009" name="Proc. Natl. Acad. Sci. U.S.A.">
        <title>Transient ciliogenesis involving Bardet-Biedl syndrome proteins is a fundamental characteristic of adipogenic differentiation.</title>
        <authorList>
            <person name="Marion V."/>
            <person name="Stoetzel C."/>
            <person name="Schlicht D."/>
            <person name="Messaddeq N."/>
            <person name="Koch M."/>
            <person name="Flori E."/>
            <person name="Danse J.M."/>
            <person name="Mandel J.-L."/>
            <person name="Dollfus H."/>
        </authorList>
    </citation>
    <scope>FUNCTION</scope>
    <scope>SUBCELLULAR LOCATION</scope>
</reference>
<reference key="7">
    <citation type="journal article" date="2010" name="Proc. Natl. Acad. Sci. U.S.A.">
        <title>BBS6, BBS10, and BBS12 form a complex with CCT/TRiC family chaperonins and mediate BBSome assembly.</title>
        <authorList>
            <person name="Seo S."/>
            <person name="Baye L.M."/>
            <person name="Schulz N.P."/>
            <person name="Beck J.S."/>
            <person name="Zhang Q."/>
            <person name="Slusarski D.C."/>
            <person name="Sheffield V.C."/>
        </authorList>
    </citation>
    <scope>FUNCTION</scope>
    <scope>IDENTIFICATION IN THE CHAPERONIN-CONTAINING T-COMPLEX</scope>
    <scope>CHARACTERIZATION OF VARIANTS BBS12 VAL-113 DEL; LEU-159; PRO-289; THR-346; MET-501 AND VAL-540</scope>
</reference>
<reference key="8">
    <citation type="journal article" date="2016" name="Mol. Vis.">
        <title>A novel H395R mutation in MKKS/BBS6 causes retinitis pigmentosa and polydactyly without other findings of Bardet-Biedl or McKusick-Kaufman syndrome.</title>
        <authorList>
            <person name="Hulleman J.D."/>
            <person name="Nguyen A."/>
            <person name="Ramprasad V.L."/>
            <person name="Murugan S."/>
            <person name="Gupta R."/>
            <person name="Mahindrakar A."/>
            <person name="Angara R."/>
            <person name="Sankurathri C."/>
            <person name="Mootha V.V."/>
        </authorList>
    </citation>
    <scope>INTERACTION WITH MKKS</scope>
</reference>
<reference key="9">
    <citation type="journal article" date="2007" name="Am. J. Hum. Genet.">
        <title>Identification of a novel BBS gene (BBS12) highlights the major role of a vertebrate-specific branch of chaperonin-related proteins in Bardet-Biedl syndrome.</title>
        <authorList>
            <person name="Stoetzel C."/>
            <person name="Muller J."/>
            <person name="Laurier V."/>
            <person name="Davis E.E."/>
            <person name="Zaghloul N.A."/>
            <person name="Vicaire S."/>
            <person name="Jacquelin C."/>
            <person name="Plewniak F."/>
            <person name="Leitch C.C."/>
            <person name="Sarda P."/>
            <person name="Hamel C."/>
            <person name="de Ravel T.J."/>
            <person name="Lewis R.A."/>
            <person name="Friederich E."/>
            <person name="Thibault C."/>
            <person name="Danse J.-M."/>
            <person name="Verloes A."/>
            <person name="Bonneau D."/>
            <person name="Katsanis N."/>
            <person name="Poch O."/>
            <person name="Mandel J.-L."/>
            <person name="Dollfus H."/>
        </authorList>
    </citation>
    <scope>VARIANTS BBS12 VAL-113 DEL; LEU-159; PRO-289; THR-346; MET-501 AND VAL-540</scope>
    <scope>VARIANTS THR-39 AND VAL-170</scope>
</reference>
<reference key="10">
    <citation type="journal article" date="2010" name="Hum. Mutat.">
        <title>Bardet-Biedl syndrome in Denmark -- report of 13 novel sequence variations in six genes.</title>
        <authorList>
            <person name="Hjortshoj T.D."/>
            <person name="Gronskov K."/>
            <person name="Philp A.R."/>
            <person name="Nishimura D.Y."/>
            <person name="Riise R."/>
            <person name="Sheffield V.C."/>
            <person name="Rosenberg T."/>
            <person name="Brondum-Nielsen K."/>
        </authorList>
    </citation>
    <scope>VARIANT BBS12 511-GLN--GLN-513 DEL</scope>
    <scope>VARIANTS THR-39; ARG-408 AND CYS-524</scope>
</reference>
<reference key="11">
    <citation type="journal article" date="2011" name="Hum. Mutat.">
        <title>BBS genotype-phenotype assessment of a multiethnic patient cohort calls for a revision of the disease definition.</title>
        <authorList>
            <person name="Deveault C."/>
            <person name="Billingsley G."/>
            <person name="Duncan J.L."/>
            <person name="Bin J."/>
            <person name="Theal R."/>
            <person name="Vincent A."/>
            <person name="Fieggen K.J."/>
            <person name="Gerth C."/>
            <person name="Noordeh N."/>
            <person name="Traboulsi E.I."/>
            <person name="Fishman G.A."/>
            <person name="Chitayat D."/>
            <person name="Knueppel T."/>
            <person name="Millan J.M."/>
            <person name="Munier F.L."/>
            <person name="Kennedy D."/>
            <person name="Jacobson S.G."/>
            <person name="Innes A.M."/>
            <person name="Mitchell G.A."/>
            <person name="Boycott K."/>
            <person name="Heon E."/>
        </authorList>
    </citation>
    <scope>VARIANTS THR-39; SER-119 AND HIS-263</scope>
    <scope>VARIANTS BBS12 ARG-88; GLU-293; GLN-355; MET-400; MET-501; HIS-525; ASP-539 AND CYS-674</scope>
</reference>